<name>Y2136_ANOFW</name>
<comment type="similarity">
    <text evidence="1">Belongs to the UPF0736 family.</text>
</comment>
<evidence type="ECO:0000255" key="1">
    <source>
        <dbReference type="HAMAP-Rule" id="MF_01860"/>
    </source>
</evidence>
<feature type="chain" id="PRO_0000369133" description="UPF0736 protein Aflv_2136">
    <location>
        <begin position="1"/>
        <end position="246"/>
    </location>
</feature>
<dbReference type="EMBL" id="CP000922">
    <property type="protein sequence ID" value="ACJ34495.1"/>
    <property type="molecule type" value="Genomic_DNA"/>
</dbReference>
<dbReference type="RefSeq" id="WP_012575675.1">
    <property type="nucleotide sequence ID" value="NC_011567.1"/>
</dbReference>
<dbReference type="SMR" id="B7GLZ2"/>
<dbReference type="STRING" id="491915.Aflv_2136"/>
<dbReference type="GeneID" id="7038389"/>
<dbReference type="KEGG" id="afl:Aflv_2136"/>
<dbReference type="PATRIC" id="fig|491915.6.peg.2195"/>
<dbReference type="eggNOG" id="ENOG502Z8PJ">
    <property type="taxonomic scope" value="Bacteria"/>
</dbReference>
<dbReference type="HOGENOM" id="CLU_1101152_0_0_9"/>
<dbReference type="Proteomes" id="UP000000742">
    <property type="component" value="Chromosome"/>
</dbReference>
<dbReference type="HAMAP" id="MF_01860">
    <property type="entry name" value="UPF0736"/>
    <property type="match status" value="1"/>
</dbReference>
<dbReference type="InterPro" id="IPR020909">
    <property type="entry name" value="UPF0736"/>
</dbReference>
<dbReference type="Pfam" id="PF12227">
    <property type="entry name" value="DUF3603"/>
    <property type="match status" value="1"/>
</dbReference>
<accession>B7GLZ2</accession>
<reference key="1">
    <citation type="journal article" date="2008" name="Genome Biol.">
        <title>Encapsulated in silica: genome, proteome and physiology of the thermophilic bacterium Anoxybacillus flavithermus WK1.</title>
        <authorList>
            <person name="Saw J.H."/>
            <person name="Mountain B.W."/>
            <person name="Feng L."/>
            <person name="Omelchenko M.V."/>
            <person name="Hou S."/>
            <person name="Saito J.A."/>
            <person name="Stott M.B."/>
            <person name="Li D."/>
            <person name="Zhao G."/>
            <person name="Wu J."/>
            <person name="Galperin M.Y."/>
            <person name="Koonin E.V."/>
            <person name="Makarova K.S."/>
            <person name="Wolf Y.I."/>
            <person name="Rigden D.J."/>
            <person name="Dunfield P.F."/>
            <person name="Wang L."/>
            <person name="Alam M."/>
        </authorList>
    </citation>
    <scope>NUCLEOTIDE SEQUENCE [LARGE SCALE GENOMIC DNA]</scope>
    <source>
        <strain>DSM 21510 / WK1</strain>
    </source>
</reference>
<gene>
    <name type="ordered locus">Aflv_2136</name>
</gene>
<organism>
    <name type="scientific">Anoxybacillus flavithermus (strain DSM 21510 / WK1)</name>
    <dbReference type="NCBI Taxonomy" id="491915"/>
    <lineage>
        <taxon>Bacteria</taxon>
        <taxon>Bacillati</taxon>
        <taxon>Bacillota</taxon>
        <taxon>Bacilli</taxon>
        <taxon>Bacillales</taxon>
        <taxon>Anoxybacillaceae</taxon>
        <taxon>Anoxybacillus</taxon>
    </lineage>
</organism>
<sequence>MLYLHDVWVNWFEGEENGYNVCHFYEWRKDDAIELLDQVPVLKVSAPLFHHLENSLAEIPKALLEDVYQKAYVRKNHERIQLDYCFIATDGYGIIAIDTIGYHIPIRKSRLIPRQEQLVYEMMKEQEVRTYPFQQSEKEYHILSPHPALMSGLTRKERQLKQLLFMALDQLYGTKNVAEVRYWYTEWAPEKYAYIQQMSFEEAWNGLYEEAKYGWSERHVHLCERLVKGQPFFEKLWEMEQEPKVN</sequence>
<protein>
    <recommendedName>
        <fullName evidence="1">UPF0736 protein Aflv_2136</fullName>
    </recommendedName>
</protein>
<proteinExistence type="inferred from homology"/>